<organism>
    <name type="scientific">Parafrankia sp. (strain EAN1pec)</name>
    <dbReference type="NCBI Taxonomy" id="298653"/>
    <lineage>
        <taxon>Bacteria</taxon>
        <taxon>Bacillati</taxon>
        <taxon>Actinomycetota</taxon>
        <taxon>Actinomycetes</taxon>
        <taxon>Frankiales</taxon>
        <taxon>Frankiaceae</taxon>
        <taxon>Parafrankia</taxon>
    </lineage>
</organism>
<comment type="function">
    <text evidence="1">Cleaves both 3' and 5' ssDNA extremities of branched DNA structures.</text>
</comment>
<comment type="subcellular location">
    <subcellularLocation>
        <location evidence="1">Cytoplasm</location>
    </subcellularLocation>
</comment>
<comment type="similarity">
    <text evidence="1">Belongs to the NucS endonuclease family.</text>
</comment>
<sequence length="220" mass="24110">MRLVIARCSVDYIGRLKAHLPSAVRLLLVKADGSVSIHADGRAYKPLNWMSPPCVIAEEEGVWRVTNKAEEQLVISIEQILHDSTHELGVDPGLRKDGVEAHLQVLLADRPDAVREGLTLVRREYETGIGPVDLLCRDADGSTVAVEIKRKGEIDGVEQLTRYLSRLDDDPALPHPVRGILCAQSITPQARLLAADRGIACSVVDYDALRGLEPSIPTLF</sequence>
<feature type="chain" id="PRO_1000198199" description="Endonuclease NucS">
    <location>
        <begin position="1"/>
        <end position="220"/>
    </location>
</feature>
<accession>A8L3X7</accession>
<dbReference type="EC" id="3.1.-.-" evidence="1"/>
<dbReference type="EMBL" id="CP000820">
    <property type="protein sequence ID" value="ABW10492.1"/>
    <property type="molecule type" value="Genomic_DNA"/>
</dbReference>
<dbReference type="RefSeq" id="WP_020458673.1">
    <property type="nucleotide sequence ID" value="NC_009921.1"/>
</dbReference>
<dbReference type="SMR" id="A8L3X7"/>
<dbReference type="STRING" id="298653.Franean1_1036"/>
<dbReference type="KEGG" id="fre:Franean1_1036"/>
<dbReference type="eggNOG" id="COG1637">
    <property type="taxonomic scope" value="Bacteria"/>
</dbReference>
<dbReference type="HOGENOM" id="CLU_069350_0_0_11"/>
<dbReference type="GO" id="GO:0005737">
    <property type="term" value="C:cytoplasm"/>
    <property type="evidence" value="ECO:0007669"/>
    <property type="project" value="UniProtKB-SubCell"/>
</dbReference>
<dbReference type="GO" id="GO:0003677">
    <property type="term" value="F:DNA binding"/>
    <property type="evidence" value="ECO:0007669"/>
    <property type="project" value="UniProtKB-KW"/>
</dbReference>
<dbReference type="GO" id="GO:0000014">
    <property type="term" value="F:single-stranded DNA endodeoxyribonuclease activity"/>
    <property type="evidence" value="ECO:0007669"/>
    <property type="project" value="UniProtKB-UniRule"/>
</dbReference>
<dbReference type="CDD" id="cd22341">
    <property type="entry name" value="NucS-like"/>
    <property type="match status" value="1"/>
</dbReference>
<dbReference type="Gene3D" id="2.70.180.20">
    <property type="match status" value="1"/>
</dbReference>
<dbReference type="Gene3D" id="3.40.1350.10">
    <property type="match status" value="1"/>
</dbReference>
<dbReference type="HAMAP" id="MF_00722">
    <property type="entry name" value="NucS"/>
    <property type="match status" value="1"/>
</dbReference>
<dbReference type="InterPro" id="IPR002793">
    <property type="entry name" value="Endonuclease_NucS"/>
</dbReference>
<dbReference type="InterPro" id="IPR048301">
    <property type="entry name" value="NucS_C"/>
</dbReference>
<dbReference type="InterPro" id="IPR048302">
    <property type="entry name" value="NucS_N"/>
</dbReference>
<dbReference type="InterPro" id="IPR049173">
    <property type="entry name" value="NucS_N_sf"/>
</dbReference>
<dbReference type="InterPro" id="IPR011856">
    <property type="entry name" value="tRNA_endonuc-like_dom_sf"/>
</dbReference>
<dbReference type="NCBIfam" id="NF002876">
    <property type="entry name" value="PRK03298.1"/>
    <property type="match status" value="1"/>
</dbReference>
<dbReference type="PANTHER" id="PTHR38814">
    <property type="entry name" value="ENDONUCLEASE NUCS"/>
    <property type="match status" value="1"/>
</dbReference>
<dbReference type="PANTHER" id="PTHR38814:SF1">
    <property type="entry name" value="ENDONUCLEASE NUCS"/>
    <property type="match status" value="1"/>
</dbReference>
<dbReference type="Pfam" id="PF01939">
    <property type="entry name" value="NucS_C"/>
    <property type="match status" value="1"/>
</dbReference>
<dbReference type="Pfam" id="PF21003">
    <property type="entry name" value="NucS_N"/>
    <property type="match status" value="1"/>
</dbReference>
<reference key="1">
    <citation type="journal article" date="2007" name="Genome Res.">
        <title>Genome characteristics of facultatively symbiotic Frankia sp. strains reflect host range and host plant biogeography.</title>
        <authorList>
            <person name="Normand P."/>
            <person name="Lapierre P."/>
            <person name="Tisa L.S."/>
            <person name="Gogarten J.P."/>
            <person name="Alloisio N."/>
            <person name="Bagnarol E."/>
            <person name="Bassi C.A."/>
            <person name="Berry A.M."/>
            <person name="Bickhart D.M."/>
            <person name="Choisne N."/>
            <person name="Couloux A."/>
            <person name="Cournoyer B."/>
            <person name="Cruveiller S."/>
            <person name="Daubin V."/>
            <person name="Demange N."/>
            <person name="Francino M.P."/>
            <person name="Goltsman E."/>
            <person name="Huang Y."/>
            <person name="Kopp O.R."/>
            <person name="Labarre L."/>
            <person name="Lapidus A."/>
            <person name="Lavire C."/>
            <person name="Marechal J."/>
            <person name="Martinez M."/>
            <person name="Mastronunzio J.E."/>
            <person name="Mullin B.C."/>
            <person name="Niemann J."/>
            <person name="Pujic P."/>
            <person name="Rawnsley T."/>
            <person name="Rouy Z."/>
            <person name="Schenowitz C."/>
            <person name="Sellstedt A."/>
            <person name="Tavares F."/>
            <person name="Tomkins J.P."/>
            <person name="Vallenet D."/>
            <person name="Valverde C."/>
            <person name="Wall L.G."/>
            <person name="Wang Y."/>
            <person name="Medigue C."/>
            <person name="Benson D.R."/>
        </authorList>
    </citation>
    <scope>NUCLEOTIDE SEQUENCE [LARGE SCALE GENOMIC DNA]</scope>
    <source>
        <strain>EAN1pec</strain>
    </source>
</reference>
<keyword id="KW-0963">Cytoplasm</keyword>
<keyword id="KW-0238">DNA-binding</keyword>
<keyword id="KW-0255">Endonuclease</keyword>
<keyword id="KW-0378">Hydrolase</keyword>
<keyword id="KW-0540">Nuclease</keyword>
<protein>
    <recommendedName>
        <fullName evidence="1">Endonuclease NucS</fullName>
        <ecNumber evidence="1">3.1.-.-</ecNumber>
    </recommendedName>
</protein>
<gene>
    <name evidence="1" type="primary">nucS</name>
    <name type="ordered locus">Franean1_1036</name>
</gene>
<name>NUCS_PARS2</name>
<evidence type="ECO:0000255" key="1">
    <source>
        <dbReference type="HAMAP-Rule" id="MF_00722"/>
    </source>
</evidence>
<proteinExistence type="inferred from homology"/>